<dbReference type="EC" id="5.6.1.7" evidence="1"/>
<dbReference type="EMBL" id="U17953">
    <property type="protein sequence ID" value="AAB39072.1"/>
    <property type="molecule type" value="Genomic_DNA"/>
</dbReference>
<dbReference type="SMR" id="Q50271"/>
<dbReference type="GO" id="GO:0005737">
    <property type="term" value="C:cytoplasm"/>
    <property type="evidence" value="ECO:0007669"/>
    <property type="project" value="UniProtKB-SubCell"/>
</dbReference>
<dbReference type="GO" id="GO:0005524">
    <property type="term" value="F:ATP binding"/>
    <property type="evidence" value="ECO:0007669"/>
    <property type="project" value="UniProtKB-KW"/>
</dbReference>
<dbReference type="GO" id="GO:0140662">
    <property type="term" value="F:ATP-dependent protein folding chaperone"/>
    <property type="evidence" value="ECO:0007669"/>
    <property type="project" value="InterPro"/>
</dbReference>
<dbReference type="GO" id="GO:0016853">
    <property type="term" value="F:isomerase activity"/>
    <property type="evidence" value="ECO:0007669"/>
    <property type="project" value="UniProtKB-KW"/>
</dbReference>
<dbReference type="GO" id="GO:0042026">
    <property type="term" value="P:protein refolding"/>
    <property type="evidence" value="ECO:0007669"/>
    <property type="project" value="InterPro"/>
</dbReference>
<dbReference type="Gene3D" id="1.10.560.10">
    <property type="entry name" value="GroEL-like equatorial domain"/>
    <property type="match status" value="1"/>
</dbReference>
<dbReference type="Gene3D" id="3.30.260.10">
    <property type="entry name" value="TCP-1-like chaperonin intermediate domain"/>
    <property type="match status" value="1"/>
</dbReference>
<dbReference type="InterPro" id="IPR001844">
    <property type="entry name" value="Cpn60/GroEL"/>
</dbReference>
<dbReference type="InterPro" id="IPR002423">
    <property type="entry name" value="Cpn60/GroEL/TCP-1"/>
</dbReference>
<dbReference type="InterPro" id="IPR027413">
    <property type="entry name" value="GROEL-like_equatorial_sf"/>
</dbReference>
<dbReference type="InterPro" id="IPR027410">
    <property type="entry name" value="TCP-1-like_intermed_sf"/>
</dbReference>
<dbReference type="PANTHER" id="PTHR45633">
    <property type="entry name" value="60 KDA HEAT SHOCK PROTEIN, MITOCHONDRIAL"/>
    <property type="match status" value="1"/>
</dbReference>
<dbReference type="Pfam" id="PF00118">
    <property type="entry name" value="Cpn60_TCP1"/>
    <property type="match status" value="1"/>
</dbReference>
<dbReference type="SUPFAM" id="SSF48592">
    <property type="entry name" value="GroEL equatorial domain-like"/>
    <property type="match status" value="1"/>
</dbReference>
<evidence type="ECO:0000255" key="1">
    <source>
        <dbReference type="HAMAP-Rule" id="MF_00600"/>
    </source>
</evidence>
<evidence type="ECO:0000305" key="2"/>
<gene>
    <name evidence="1" type="primary">groEL</name>
    <name evidence="1" type="synonym">groL</name>
    <name type="synonym">mopA</name>
</gene>
<organism>
    <name type="scientific">Mycolicibacterium pulveris</name>
    <name type="common">Mycobacterium pulveris</name>
    <dbReference type="NCBI Taxonomy" id="36813"/>
    <lineage>
        <taxon>Bacteria</taxon>
        <taxon>Bacillati</taxon>
        <taxon>Actinomycetota</taxon>
        <taxon>Actinomycetes</taxon>
        <taxon>Mycobacteriales</taxon>
        <taxon>Mycobacteriaceae</taxon>
        <taxon>Mycolicibacterium</taxon>
    </lineage>
</organism>
<reference key="1">
    <citation type="journal article" date="1995" name="Arch. Pathol. Lab. Med.">
        <title>Rapid Mycobacterium species assignment and unambiguous identification of mutations associated with antimicrobial resistance in Mycobacterium tuberculosis by automated DNA sequencing.</title>
        <authorList>
            <person name="Kapur V."/>
            <person name="Li L.L."/>
            <person name="Hamrick M.R."/>
            <person name="Plikaytis B.B."/>
            <person name="Shinnick T.M."/>
            <person name="Telenti A."/>
            <person name="Jacobs W.R. Jr."/>
            <person name="Banerjee A."/>
            <person name="Cole S."/>
            <person name="Yuen K.Y."/>
            <person name="Clarridge J.E."/>
            <person name="Kreiswirth B.N."/>
            <person name="Musser J.M."/>
        </authorList>
    </citation>
    <scope>NUCLEOTIDE SEQUENCE [GENOMIC DNA]</scope>
    <source>
        <strain>553</strain>
    </source>
</reference>
<feature type="chain" id="PRO_0000063446" description="Chaperonin GroEL">
    <location>
        <begin position="1" status="less than"/>
        <end position="120" status="greater than"/>
    </location>
</feature>
<feature type="binding site" evidence="1">
    <location>
        <begin position="23"/>
        <end position="27"/>
    </location>
    <ligand>
        <name>ATP</name>
        <dbReference type="ChEBI" id="CHEBI:30616"/>
    </ligand>
</feature>
<feature type="non-terminal residue">
    <location>
        <position position="1"/>
    </location>
</feature>
<feature type="non-terminal residue">
    <location>
        <position position="120"/>
    </location>
</feature>
<name>CH60_MYCPV</name>
<comment type="function">
    <text evidence="1">Together with its co-chaperonin GroES, plays an essential role in assisting protein folding. The GroEL-GroES system forms a nano-cage that allows encapsulation of the non-native substrate proteins and provides a physical environment optimized to promote and accelerate protein folding.</text>
</comment>
<comment type="catalytic activity">
    <reaction evidence="1">
        <text>ATP + H2O + a folded polypeptide = ADP + phosphate + an unfolded polypeptide.</text>
        <dbReference type="EC" id="5.6.1.7"/>
    </reaction>
</comment>
<comment type="subunit">
    <text evidence="1">Forms a cylinder of 14 subunits composed of two heptameric rings stacked back-to-back. Interacts with the co-chaperonin GroES.</text>
</comment>
<comment type="subcellular location">
    <subcellularLocation>
        <location evidence="1">Cytoplasm</location>
    </subcellularLocation>
</comment>
<comment type="similarity">
    <text evidence="1 2">Belongs to the chaperonin (HSP60) family.</text>
</comment>
<proteinExistence type="inferred from homology"/>
<accession>Q50271</accession>
<sequence>PYEKIGAELVKEVAKKTDDVAGDGTTTATVLAQALVREGLRNVAAGANPLGLKRGIEKAVEKITETLLKSAKEVETKDQIAATAAISAGDLQIGELIAEAMDKVGNEGVITVEESQTFGL</sequence>
<protein>
    <recommendedName>
        <fullName evidence="1">Chaperonin GroEL</fullName>
        <ecNumber evidence="1">5.6.1.7</ecNumber>
    </recommendedName>
    <alternativeName>
        <fullName evidence="1">60 kDa chaperonin</fullName>
    </alternativeName>
    <alternativeName>
        <fullName>65 kDa heat shock protein</fullName>
    </alternativeName>
    <alternativeName>
        <fullName evidence="1">Chaperonin-60</fullName>
        <shortName evidence="1">Cpn60</shortName>
    </alternativeName>
</protein>
<keyword id="KW-0067">ATP-binding</keyword>
<keyword id="KW-0143">Chaperone</keyword>
<keyword id="KW-0963">Cytoplasm</keyword>
<keyword id="KW-0413">Isomerase</keyword>
<keyword id="KW-0547">Nucleotide-binding</keyword>
<keyword id="KW-0346">Stress response</keyword>